<feature type="chain" id="PRO_0000354740" description="Catalase-peroxidase 2">
    <location>
        <begin position="1"/>
        <end position="736"/>
    </location>
</feature>
<feature type="active site" description="Proton acceptor" evidence="1">
    <location>
        <position position="92"/>
    </location>
</feature>
<feature type="binding site" description="axial binding residue" evidence="1">
    <location>
        <position position="268"/>
    </location>
    <ligand>
        <name>heme b</name>
        <dbReference type="ChEBI" id="CHEBI:60344"/>
    </ligand>
    <ligandPart>
        <name>Fe</name>
        <dbReference type="ChEBI" id="CHEBI:18248"/>
    </ligandPart>
</feature>
<feature type="site" description="Transition state stabilizer" evidence="1">
    <location>
        <position position="88"/>
    </location>
</feature>
<feature type="cross-link" description="Tryptophyl-tyrosyl-methioninium (Trp-Tyr) (with M-253)" evidence="1">
    <location>
        <begin position="91"/>
        <end position="227"/>
    </location>
</feature>
<feature type="cross-link" description="Tryptophyl-tyrosyl-methioninium (Tyr-Met) (with W-91)" evidence="1">
    <location>
        <begin position="227"/>
        <end position="253"/>
    </location>
</feature>
<name>KATG2_BURCJ</name>
<sequence length="736" mass="80487">MSNEGQCPFNHANGGGTTNRDWWPNELRLDLLSQHSSKTDPLDPGFNYAEAFNSLDLDALRKDLAALMTDSQDWWPADFGHYGPLFVRMAWHSAGTYRMGDGRGGAGRGQQRFAPLNSWPDNVSLDKARRLLWPIKQKYGQKISWADLLILTGDVALTTMGFKTFGYAGGREDTWEPDRDVYWGSETTWLGGDLRYDKGGACESQHGGNAGRNLENPLAAVQMGLIYVNPEGPDGNPDPVAAAYDIREVFGRMAMNDEETVALIAGGHAFGKTHGAGPADNVGLEPEAAGLEQQGLGWKNSFGTGKGADTITSGLEVTWSDTPTQWGMGFFKNLFGYEWELTKSPAGAHQWVAKNAEPTIPHAHDPSKKLLPTMLTTDLSLRFDPVYEKISRHFMDNPDVFADAFARAWFKLTHRDMGPRARYLGPDVPTEELIWQDPIPAVDHVLVDDTDVAPLKETILASGLSVAELVSTAWASASTFRGSDKRGGANGARIRLAPQKDWAVNEPARLAKVLKVLERIQGEFNSTQPGGKKISLADLIVLAGGAGIEQAAKRAGHDVVVPFAPGRMDASQEQTDAHSFAVLEPVADGFRNFVKGKFAVPAEALLIDKAQLLTLTAPQMTALVGGLRVLNVQTGDEKHGVFTDQPETLTVDFFRNLLDMATEWKPIAGEDTYEGRDRRTGELKWTGTRVDLVFGSNAVLRALSEVYASADGEAKFIRDFVAAWVKVMNLDRFDLA</sequence>
<accession>Q4F6N6</accession>
<reference key="1">
    <citation type="journal article" date="2007" name="FEMS Immunol. Med. Microbiol.">
        <title>Characterization of a bifunctional catalase-peroxidase of Burkholderia cenocepacia.</title>
        <authorList>
            <person name="Charalabous P."/>
            <person name="Risk J.M."/>
            <person name="Jenkins R."/>
            <person name="Birss A.J."/>
            <person name="Hart C.A."/>
            <person name="Smalley J.W."/>
        </authorList>
    </citation>
    <scope>NUCLEOTIDE SEQUENCE [GENOMIC DNA]</scope>
    <scope>FUNCTION</scope>
    <scope>BIOPHYSICOCHEMICAL PROPERTIES</scope>
</reference>
<reference key="2">
    <citation type="journal article" date="2009" name="J. Bacteriol.">
        <title>The genome of Burkholderia cenocepacia J2315, an epidemic pathogen of cystic fibrosis patients.</title>
        <authorList>
            <person name="Holden M.T."/>
            <person name="Seth-Smith H.M."/>
            <person name="Crossman L.C."/>
            <person name="Sebaihia M."/>
            <person name="Bentley S.D."/>
            <person name="Cerdeno-Tarraga A.M."/>
            <person name="Thomson N.R."/>
            <person name="Bason N."/>
            <person name="Quail M.A."/>
            <person name="Sharp S."/>
            <person name="Cherevach I."/>
            <person name="Churcher C."/>
            <person name="Goodhead I."/>
            <person name="Hauser H."/>
            <person name="Holroyd N."/>
            <person name="Mungall K."/>
            <person name="Scott P."/>
            <person name="Walker D."/>
            <person name="White B."/>
            <person name="Rose H."/>
            <person name="Iversen P."/>
            <person name="Mil-Homens D."/>
            <person name="Rocha E.P."/>
            <person name="Fialho A.M."/>
            <person name="Baldwin A."/>
            <person name="Dowson C."/>
            <person name="Barrell B.G."/>
            <person name="Govan J.R."/>
            <person name="Vandamme P."/>
            <person name="Hart C.A."/>
            <person name="Mahenthiralingam E."/>
            <person name="Parkhill J."/>
        </authorList>
    </citation>
    <scope>NUCLEOTIDE SEQUENCE [LARGE SCALE GENOMIC DNA]</scope>
    <source>
        <strain>ATCC BAA-245 / DSM 16553 / LMG 16656 / NCTC 13227 / J2315 / CF5610</strain>
    </source>
</reference>
<organism>
    <name type="scientific">Burkholderia cenocepacia (strain ATCC BAA-245 / DSM 16553 / LMG 16656 / NCTC 13227 / J2315 / CF5610)</name>
    <name type="common">Burkholderia cepacia (strain J2315)</name>
    <dbReference type="NCBI Taxonomy" id="216591"/>
    <lineage>
        <taxon>Bacteria</taxon>
        <taxon>Pseudomonadati</taxon>
        <taxon>Pseudomonadota</taxon>
        <taxon>Betaproteobacteria</taxon>
        <taxon>Burkholderiales</taxon>
        <taxon>Burkholderiaceae</taxon>
        <taxon>Burkholderia</taxon>
        <taxon>Burkholderia cepacia complex</taxon>
    </lineage>
</organism>
<protein>
    <recommendedName>
        <fullName evidence="1">Catalase-peroxidase 2</fullName>
        <shortName evidence="1">CP 2</shortName>
        <ecNumber evidence="1">1.11.1.21</ecNumber>
    </recommendedName>
    <alternativeName>
        <fullName evidence="1">Peroxidase/catalase 2</fullName>
    </alternativeName>
</protein>
<evidence type="ECO:0000255" key="1">
    <source>
        <dbReference type="HAMAP-Rule" id="MF_01961"/>
    </source>
</evidence>
<evidence type="ECO:0000269" key="2">
    <source>
    </source>
</evidence>
<proteinExistence type="evidence at protein level"/>
<comment type="function">
    <text evidence="1 2">Bifunctional enzyme with both catalase and broad-spectrum peroxidase activity. Shows peroxidase specificity towards odianisidine, ABTS and pyrogallol, but methoxyphenol and 2-chloronaphthol are not peroxidized.</text>
</comment>
<comment type="catalytic activity">
    <reaction evidence="1">
        <text>H2O2 + AH2 = A + 2 H2O</text>
        <dbReference type="Rhea" id="RHEA:30275"/>
        <dbReference type="ChEBI" id="CHEBI:13193"/>
        <dbReference type="ChEBI" id="CHEBI:15377"/>
        <dbReference type="ChEBI" id="CHEBI:16240"/>
        <dbReference type="ChEBI" id="CHEBI:17499"/>
        <dbReference type="EC" id="1.11.1.21"/>
    </reaction>
</comment>
<comment type="catalytic activity">
    <reaction evidence="1">
        <text>2 H2O2 = O2 + 2 H2O</text>
        <dbReference type="Rhea" id="RHEA:20309"/>
        <dbReference type="ChEBI" id="CHEBI:15377"/>
        <dbReference type="ChEBI" id="CHEBI:15379"/>
        <dbReference type="ChEBI" id="CHEBI:16240"/>
        <dbReference type="EC" id="1.11.1.21"/>
    </reaction>
</comment>
<comment type="cofactor">
    <cofactor evidence="1">
        <name>heme b</name>
        <dbReference type="ChEBI" id="CHEBI:60344"/>
    </cofactor>
    <text evidence="1">Binds 1 heme b (iron(II)-protoporphyrin IX) group per dimer.</text>
</comment>
<comment type="biophysicochemical properties">
    <phDependence>
        <text evidence="2">Optimum pH is 5.5 for the peroxidase reaction and 6.0 for the catalase reaction. Active from pH 5.5 to 8.5.</text>
    </phDependence>
</comment>
<comment type="subunit">
    <text evidence="1">Homodimer or homotetramer.</text>
</comment>
<comment type="PTM">
    <text evidence="1">Formation of the three residue Trp-Tyr-Met cross-link is important for the catalase, but not the peroxidase activity of the enzyme.</text>
</comment>
<comment type="similarity">
    <text evidence="1">Belongs to the peroxidase family. Peroxidase/catalase subfamily.</text>
</comment>
<dbReference type="EC" id="1.11.1.21" evidence="1"/>
<dbReference type="EMBL" id="DQ112341">
    <property type="protein sequence ID" value="AAZ14051.1"/>
    <property type="molecule type" value="Genomic_DNA"/>
</dbReference>
<dbReference type="EMBL" id="AM747721">
    <property type="protein sequence ID" value="CAR55964.1"/>
    <property type="molecule type" value="Genomic_DNA"/>
</dbReference>
<dbReference type="SMR" id="Q4F6N6"/>
<dbReference type="PeroxiBase" id="2309">
    <property type="entry name" value="BcenCP01_J2315"/>
</dbReference>
<dbReference type="KEGG" id="bcj:BCAM2107"/>
<dbReference type="eggNOG" id="COG0376">
    <property type="taxonomic scope" value="Bacteria"/>
</dbReference>
<dbReference type="HOGENOM" id="CLU_025424_2_0_4"/>
<dbReference type="BioCyc" id="BCEN216591:G1G1V-6173-MONOMER"/>
<dbReference type="BRENDA" id="1.11.1.6">
    <property type="organism ID" value="8982"/>
</dbReference>
<dbReference type="Proteomes" id="UP000001035">
    <property type="component" value="Chromosome 2"/>
</dbReference>
<dbReference type="GO" id="GO:0005829">
    <property type="term" value="C:cytosol"/>
    <property type="evidence" value="ECO:0007669"/>
    <property type="project" value="TreeGrafter"/>
</dbReference>
<dbReference type="GO" id="GO:0004096">
    <property type="term" value="F:catalase activity"/>
    <property type="evidence" value="ECO:0007669"/>
    <property type="project" value="UniProtKB-UniRule"/>
</dbReference>
<dbReference type="GO" id="GO:0020037">
    <property type="term" value="F:heme binding"/>
    <property type="evidence" value="ECO:0007669"/>
    <property type="project" value="InterPro"/>
</dbReference>
<dbReference type="GO" id="GO:0046872">
    <property type="term" value="F:metal ion binding"/>
    <property type="evidence" value="ECO:0007669"/>
    <property type="project" value="UniProtKB-KW"/>
</dbReference>
<dbReference type="GO" id="GO:0070301">
    <property type="term" value="P:cellular response to hydrogen peroxide"/>
    <property type="evidence" value="ECO:0007669"/>
    <property type="project" value="TreeGrafter"/>
</dbReference>
<dbReference type="GO" id="GO:0042744">
    <property type="term" value="P:hydrogen peroxide catabolic process"/>
    <property type="evidence" value="ECO:0007669"/>
    <property type="project" value="UniProtKB-KW"/>
</dbReference>
<dbReference type="CDD" id="cd00649">
    <property type="entry name" value="catalase_peroxidase_1"/>
    <property type="match status" value="1"/>
</dbReference>
<dbReference type="CDD" id="cd08200">
    <property type="entry name" value="catalase_peroxidase_2"/>
    <property type="match status" value="1"/>
</dbReference>
<dbReference type="FunFam" id="1.10.420.10:FF:000002">
    <property type="entry name" value="Catalase-peroxidase"/>
    <property type="match status" value="1"/>
</dbReference>
<dbReference type="FunFam" id="1.10.420.10:FF:000004">
    <property type="entry name" value="Catalase-peroxidase"/>
    <property type="match status" value="1"/>
</dbReference>
<dbReference type="FunFam" id="1.10.520.10:FF:000002">
    <property type="entry name" value="Catalase-peroxidase"/>
    <property type="match status" value="1"/>
</dbReference>
<dbReference type="FunFam" id="1.10.520.10:FF:000004">
    <property type="entry name" value="Catalase-peroxidase"/>
    <property type="match status" value="1"/>
</dbReference>
<dbReference type="Gene3D" id="1.10.520.10">
    <property type="match status" value="2"/>
</dbReference>
<dbReference type="Gene3D" id="1.10.420.10">
    <property type="entry name" value="Peroxidase, domain 2"/>
    <property type="match status" value="2"/>
</dbReference>
<dbReference type="HAMAP" id="MF_01961">
    <property type="entry name" value="Catal_peroxid"/>
    <property type="match status" value="1"/>
</dbReference>
<dbReference type="InterPro" id="IPR000763">
    <property type="entry name" value="Catalase_peroxidase"/>
</dbReference>
<dbReference type="InterPro" id="IPR002016">
    <property type="entry name" value="Haem_peroxidase"/>
</dbReference>
<dbReference type="InterPro" id="IPR010255">
    <property type="entry name" value="Haem_peroxidase_sf"/>
</dbReference>
<dbReference type="InterPro" id="IPR019794">
    <property type="entry name" value="Peroxidases_AS"/>
</dbReference>
<dbReference type="InterPro" id="IPR019793">
    <property type="entry name" value="Peroxidases_heam-ligand_BS"/>
</dbReference>
<dbReference type="NCBIfam" id="TIGR00198">
    <property type="entry name" value="cat_per_HPI"/>
    <property type="match status" value="1"/>
</dbReference>
<dbReference type="NCBIfam" id="NF011635">
    <property type="entry name" value="PRK15061.1"/>
    <property type="match status" value="1"/>
</dbReference>
<dbReference type="PANTHER" id="PTHR30555:SF0">
    <property type="entry name" value="CATALASE-PEROXIDASE"/>
    <property type="match status" value="1"/>
</dbReference>
<dbReference type="PANTHER" id="PTHR30555">
    <property type="entry name" value="HYDROPEROXIDASE I, BIFUNCTIONAL CATALASE-PEROXIDASE"/>
    <property type="match status" value="1"/>
</dbReference>
<dbReference type="Pfam" id="PF00141">
    <property type="entry name" value="peroxidase"/>
    <property type="match status" value="2"/>
</dbReference>
<dbReference type="PRINTS" id="PR00460">
    <property type="entry name" value="BPEROXIDASE"/>
</dbReference>
<dbReference type="PRINTS" id="PR00458">
    <property type="entry name" value="PEROXIDASE"/>
</dbReference>
<dbReference type="SUPFAM" id="SSF48113">
    <property type="entry name" value="Heme-dependent peroxidases"/>
    <property type="match status" value="2"/>
</dbReference>
<dbReference type="PROSITE" id="PS00435">
    <property type="entry name" value="PEROXIDASE_1"/>
    <property type="match status" value="1"/>
</dbReference>
<dbReference type="PROSITE" id="PS00436">
    <property type="entry name" value="PEROXIDASE_2"/>
    <property type="match status" value="1"/>
</dbReference>
<dbReference type="PROSITE" id="PS50873">
    <property type="entry name" value="PEROXIDASE_4"/>
    <property type="match status" value="1"/>
</dbReference>
<keyword id="KW-0349">Heme</keyword>
<keyword id="KW-0376">Hydrogen peroxide</keyword>
<keyword id="KW-0408">Iron</keyword>
<keyword id="KW-0479">Metal-binding</keyword>
<keyword id="KW-0560">Oxidoreductase</keyword>
<keyword id="KW-0575">Peroxidase</keyword>
<gene>
    <name evidence="1" type="primary">katG2</name>
    <name type="synonym">katA</name>
    <name type="ordered locus">BceJ2315_55450</name>
    <name type="ORF">BCAM2107</name>
</gene>